<organismHost>
    <name type="scientific">Escherichia coli</name>
    <dbReference type="NCBI Taxonomy" id="562"/>
</organismHost>
<sequence length="458" mass="50885">MTIDINKLKEELGLGDLAKSLEGLTAAQKAQEAERMRKEQEEKELARMNDLVSKAVGEDRKRLEEALELVKSLDEKSKKSNELFAQTVEKQQETIVGLQDEIKSLLTAREGRSFVGDSVAKALYGTQENFEDEVEKLVLLSYVMEKGVFETEHGQRHLKAVNQSSSVEVSSESYETIFSQRIIRDLQKELVVGALFEELPMSSKILTMLVEPDAGKATWVAASTYGTDTTTGEEVKGALKEIHFSTYKLAAKSFITDETEEDAIFSLLPLLRKRLIEAHAVSIEEAFMTGDGSGKPKGLLTLASEDSAKVVTEAKADGSVLVTAKTISKLRRKLGRHGLKLSKLVLIVSMDAYYDLLEDEEWQDVAQVGNDSVKLQGQVGRIYGLPVVVSEYFPAKANSAEFAVIVYKDNFVMPRQRAVTVERERQAGKQRDAYYVTQRVNLQRYFANGVVSGTYAAS</sequence>
<accession>Q6QGD8</accession>
<accession>Q5DMF6</accession>
<reference key="1">
    <citation type="submission" date="2004-01" db="EMBL/GenBank/DDBJ databases">
        <title>Bacteriophage T5 complete genome.</title>
        <authorList>
            <person name="Ksenzenko V.N."/>
            <person name="Kaliman A.V."/>
            <person name="Krutilina A.I."/>
            <person name="Shlyapnikov M.G."/>
        </authorList>
    </citation>
    <scope>NUCLEOTIDE SEQUENCE [LARGE SCALE GENOMIC DNA]</scope>
</reference>
<reference key="2">
    <citation type="journal article" date="2005" name="Virology">
        <title>Complete genome sequence of bacteriophage T5.</title>
        <authorList>
            <person name="Wang J."/>
            <person name="Jiang Y."/>
            <person name="Vincent M."/>
            <person name="Sun Y."/>
            <person name="Yu H."/>
            <person name="Wang J."/>
            <person name="Bao Q."/>
            <person name="Kong H."/>
            <person name="Hu S."/>
        </authorList>
    </citation>
    <scope>NUCLEOTIDE SEQUENCE [LARGE SCALE GENOMIC DNA]</scope>
    <scope>INDUCTION</scope>
    <source>
        <strain evidence="13">ATCC 11303-B5</strain>
    </source>
</reference>
<reference key="3">
    <citation type="journal article" date="1973" name="Virology">
        <title>Structural proteins of bacteriophage T5.</title>
        <authorList>
            <person name="Zweig M."/>
            <person name="Cummings D.J."/>
        </authorList>
    </citation>
    <scope>SUBCELLULAR LOCATION</scope>
</reference>
<reference key="4">
    <citation type="journal article" date="2006" name="J. Mol. Biol.">
        <title>Bacteriophage T5 structure reveals similarities with HK97 and T4 suggesting evolutionary relationships.</title>
        <authorList>
            <person name="Effantin G."/>
            <person name="Boulanger P."/>
            <person name="Neumann E."/>
            <person name="Letellier L."/>
            <person name="Conway J.F."/>
        </authorList>
    </citation>
    <scope>PROTEOLYTIC CLEAVAGE</scope>
</reference>
<reference key="5">
    <citation type="journal article" date="2010" name="J. Virol.">
        <title>In vitro assembly of the T=13 procapsid of bacteriophage T5 with its scaffolding domain.</title>
        <authorList>
            <person name="Huet A."/>
            <person name="Conway J.F."/>
            <person name="Letellier L."/>
            <person name="Boulanger P."/>
        </authorList>
    </citation>
    <scope>FUNCTION</scope>
    <scope>SCAFFOLDING DOMAIN</scope>
</reference>
<reference key="6">
    <citation type="journal article" date="2013" name="J. Mol. Biol.">
        <title>A two-state cooperative expansion converts the procapsid shell of bacteriophage T5 into a highly stable capsid isomorphous to the final virion head.</title>
        <authorList>
            <person name="Preux O."/>
            <person name="Durand D."/>
            <person name="Huet A."/>
            <person name="Conway J.F."/>
            <person name="Bertin A."/>
            <person name="Boulogne C."/>
            <person name="Drouin-Wahbi J."/>
            <person name="Trevarin D."/>
            <person name="Perez J."/>
            <person name="Vachette P."/>
            <person name="Boulanger P."/>
        </authorList>
    </citation>
    <scope>FUNCTION</scope>
</reference>
<reference key="7">
    <citation type="journal article" date="2014" name="J. Virol.">
        <title>Insights into bacteriophage T5 structure from analysis of its morphogenesis genes and protein components.</title>
        <authorList>
            <person name="Zivanovic Y."/>
            <person name="Confalonieri F."/>
            <person name="Ponchon L."/>
            <person name="Lurz R."/>
            <person name="Chami M."/>
            <person name="Flayhan A."/>
            <person name="Renouard M."/>
            <person name="Huet A."/>
            <person name="Decottignies P."/>
            <person name="Davidson A.R."/>
            <person name="Breyton C."/>
            <person name="Boulanger P."/>
        </authorList>
    </citation>
    <scope>NUCLEOTIDE SEQUENCE [LARGE SCALE GENOMIC DNA]</scope>
    <scope>SUBCELLULAR LOCATION</scope>
    <source>
        <strain>St0 deletion mutant</strain>
    </source>
</reference>
<reference key="8">
    <citation type="journal article" date="2021" name="Cell">
        <title>Cyclic CMP and cyclic UMP mediate bacterial immunity against phages.</title>
        <authorList>
            <person name="Tal N."/>
            <person name="Morehouse B.R."/>
            <person name="Millman A."/>
            <person name="Stokar-Avihail A."/>
            <person name="Avraham C."/>
            <person name="Fedorenko T."/>
            <person name="Yirmiya E."/>
            <person name="Herbst E."/>
            <person name="Brandis A."/>
            <person name="Mehlman T."/>
            <person name="Oppenheimer-Shaanan Y."/>
            <person name="Keszei A.F.A."/>
            <person name="Shao S."/>
            <person name="Amitai G."/>
            <person name="Kranzusch P.J."/>
            <person name="Sorek R."/>
        </authorList>
    </citation>
    <scope>FUNCTION</scope>
    <scope>MUTAGENESIS OF LEU-45; ILE-183; MET-201; MET-208; GLU-260; ILE-283; SER-328 AND TYR-353</scope>
</reference>
<reference key="9">
    <citation type="journal article" date="2016" name="J. Mol. Biol.">
        <title>Correct assembly of the bacteriophage T5 procapsid requires both the maturation protease and the portal complex.</title>
        <authorList>
            <person name="Huet A."/>
            <person name="Duda R.L."/>
            <person name="Hendrix R.W."/>
            <person name="Boulanger P."/>
            <person name="Conway J.F."/>
        </authorList>
    </citation>
    <scope>STRUCTURE BY ELECTRON MICROSCOPY (30.0 ANGSTROMS) OF THE CAPSID</scope>
    <scope>FUNCTION</scope>
    <scope>PROTEOLYTIC PROCESSING</scope>
    <scope>INTERACTION WITH THE DECORATION PROTEIN</scope>
    <scope>INTERACTION WITH THE PORTAL PROTEIN</scope>
</reference>
<comment type="function">
    <molecule>Major capsid protein</molecule>
    <text evidence="3 4 6 7">Major capsid protein that self-associates to form 120 hexamers and 11 pentamers, building the T=13 icosahedral capsid which about 860 Angstroms in diameter. Responsible for its self-assembly into a procapsid. The phage does not need to encode a separate scaffolfing protein because its capsid protein contains the delta domain that carries that function. The capsid gains its final stability through the reorganization of the subunits that takes place upon expansion. DNA encapsidation through the portal triggers capsid expansion and the binding of the decoration protein to the capsid exterior. Might play a role in counteracting the host Pycsar defense system that is mediated by pyrimidine cyclases and leads to abortive infection.</text>
</comment>
<comment type="subunit">
    <molecule>Major capsid protein</molecule>
    <text evidence="6">Interacts with the decoration protein; each hexon binds a single copy of the decoration protein. Interacts with the portal protein (Probable).</text>
</comment>
<comment type="subcellular location">
    <molecule>Major capsid protein</molecule>
    <subcellularLocation>
        <location evidence="5 8">Virion</location>
    </subcellularLocation>
    <text evidence="8">Forms the icosahedral capsid shell which contains 775 major capsid proteins.</text>
</comment>
<comment type="domain">
    <molecule>Scaffolding domain delta</molecule>
    <text evidence="3">The scaffolding domain delta has a role of scaffold allowing the self-assembly of the capsid protein.</text>
</comment>
<comment type="PTM">
    <molecule>Scaffolding domain delta</molecule>
    <text evidence="2 6">The scaffolding domain delta is cleaved by the prohead protease and lost after assembly (PubMed:16876823). The major capsid protein precursors together with both the portal complex and the maturation protease form prohead I (PubMed:26616586). All copies of the major capsid protein precursor are cleaved to the mature major capsid protein by release of the scaffolding domain delta, yielding the metastable prohead II (PubMed:26616586).</text>
</comment>
<comment type="similarity">
    <text evidence="10">Belongs to the HK97 phage major capsid protein family.</text>
</comment>
<comment type="sequence caution" evidence="10">
    <conflict type="erroneous initiation">
        <sequence resource="EMBL-CDS" id="AAX12075"/>
    </conflict>
    <text>Truncated N-terminus.</text>
</comment>
<keyword id="KW-0002">3D-structure</keyword>
<keyword id="KW-0167">Capsid protein</keyword>
<keyword id="KW-0175">Coiled coil</keyword>
<keyword id="KW-0426">Late protein</keyword>
<keyword id="KW-1185">Reference proteome</keyword>
<keyword id="KW-1146">T=13 icosahedral capsid protein</keyword>
<keyword id="KW-0118">Viral capsid assembly</keyword>
<keyword id="KW-1188">Viral release from host cell</keyword>
<keyword id="KW-0946">Virion</keyword>
<protein>
    <recommendedName>
        <fullName>Major capsid protein</fullName>
    </recommendedName>
    <alternativeName>
        <fullName evidence="9">Capsid protein pb8</fullName>
    </alternativeName>
    <alternativeName>
        <fullName>Major head protein</fullName>
    </alternativeName>
    <component>
        <recommendedName>
            <fullName>Scaffolding domain delta</fullName>
        </recommendedName>
    </component>
</protein>
<evidence type="ECO:0000255" key="1"/>
<evidence type="ECO:0000269" key="2">
    <source>
    </source>
</evidence>
<evidence type="ECO:0000269" key="3">
    <source>
    </source>
</evidence>
<evidence type="ECO:0000269" key="4">
    <source>
    </source>
</evidence>
<evidence type="ECO:0000269" key="5">
    <source>
    </source>
</evidence>
<evidence type="ECO:0000269" key="6">
    <source>
    </source>
</evidence>
<evidence type="ECO:0000269" key="7">
    <source>
    </source>
</evidence>
<evidence type="ECO:0000269" key="8">
    <source>
    </source>
</evidence>
<evidence type="ECO:0000303" key="9">
    <source>
    </source>
</evidence>
<evidence type="ECO:0000305" key="10"/>
<evidence type="ECO:0000312" key="11">
    <source>
        <dbReference type="EMBL" id="AAS77188.1"/>
    </source>
</evidence>
<evidence type="ECO:0000312" key="12">
    <source>
        <dbReference type="EMBL" id="AAU05284.1"/>
    </source>
</evidence>
<evidence type="ECO:0000312" key="13">
    <source>
        <dbReference type="EMBL" id="AAX12075.1"/>
    </source>
</evidence>
<gene>
    <name evidence="11" type="primary">D20</name>
    <name type="ORF">ORF138</name>
    <name evidence="11" type="ORF">T5.149</name>
    <name evidence="12" type="ORF">T5p145</name>
</gene>
<feature type="chain" id="PRO_0000433205" description="Scaffolding domain delta" evidence="2">
    <location>
        <begin position="1"/>
        <end position="159"/>
    </location>
</feature>
<feature type="chain" id="PRO_0000432352" description="Major capsid protein">
    <location>
        <begin position="160"/>
        <end position="458"/>
    </location>
</feature>
<feature type="coiled-coil region" evidence="1">
    <location>
        <begin position="21"/>
        <end position="110"/>
    </location>
</feature>
<feature type="site" description="Cleavage; by the prohead protease" evidence="2 10">
    <location>
        <begin position="159"/>
        <end position="160"/>
    </location>
</feature>
<feature type="mutagenesis site" description="Confers resistance to Pycsar-mediated defense." evidence="7">
    <original>L</original>
    <variation>P</variation>
    <location>
        <position position="45"/>
    </location>
</feature>
<feature type="mutagenesis site" description="Confers resistance to Pycsar-mediated defense." evidence="7">
    <original>I</original>
    <variation>T</variation>
    <location>
        <position position="183"/>
    </location>
</feature>
<feature type="mutagenesis site" description="Confers resistance to Pycsar-mediated defense." evidence="7">
    <original>M</original>
    <variation>V</variation>
    <location>
        <position position="201"/>
    </location>
</feature>
<feature type="mutagenesis site" description="Confers resistance to Pycsar-mediated defense." evidence="7">
    <original>M</original>
    <variation>T</variation>
    <location>
        <position position="208"/>
    </location>
</feature>
<feature type="mutagenesis site" description="Confers resistance to Pycsar-mediated defense." evidence="7">
    <original>E</original>
    <variation>G</variation>
    <location>
        <position position="260"/>
    </location>
</feature>
<feature type="mutagenesis site" description="Confers resistance to Pycsar-mediated defense." evidence="7">
    <original>I</original>
    <variation>T</variation>
    <location>
        <position position="283"/>
    </location>
</feature>
<feature type="mutagenesis site" description="Confers resistance to Pycsar-mediated defense, reduced fitness compared to wild-type phage." evidence="7">
    <original>S</original>
    <variation>P</variation>
    <location>
        <position position="328"/>
    </location>
</feature>
<feature type="mutagenesis site" description="Confers resistance to Pycsar-mediated defense, reduced fitness compared to wild-type phage." evidence="7">
    <original>Y</original>
    <variation>C</variation>
    <location>
        <position position="353"/>
    </location>
</feature>
<proteinExistence type="evidence at protein level"/>
<organism>
    <name type="scientific">Escherichia phage T5</name>
    <name type="common">Enterobacteria phage T5</name>
    <dbReference type="NCBI Taxonomy" id="2695836"/>
    <lineage>
        <taxon>Viruses</taxon>
        <taxon>Duplodnaviria</taxon>
        <taxon>Heunggongvirae</taxon>
        <taxon>Uroviricota</taxon>
        <taxon>Caudoviricetes</taxon>
        <taxon>Demerecviridae</taxon>
        <taxon>Markadamsvirinae</taxon>
        <taxon>Tequintavirus</taxon>
        <taxon>Tequintavirus T5</taxon>
    </lineage>
</organism>
<name>CAPSD_BPT5</name>
<dbReference type="EMBL" id="AY692264">
    <property type="protein sequence ID" value="AAU05284.1"/>
    <property type="molecule type" value="Genomic_DNA"/>
</dbReference>
<dbReference type="EMBL" id="AY543070">
    <property type="protein sequence ID" value="AAS77188.1"/>
    <property type="molecule type" value="Genomic_DNA"/>
</dbReference>
<dbReference type="EMBL" id="AY587007">
    <property type="protein sequence ID" value="AAX12075.1"/>
    <property type="status" value="ALT_INIT"/>
    <property type="molecule type" value="Genomic_DNA"/>
</dbReference>
<dbReference type="PDB" id="5TJT">
    <property type="method" value="EM"/>
    <property type="resolution" value="9.00 A"/>
    <property type="chains" value="A/B/C/D/E/F=160-458"/>
</dbReference>
<dbReference type="PDB" id="6OKB">
    <property type="method" value="EM"/>
    <property type="resolution" value="6.70 A"/>
    <property type="chains" value="A/B/C/D/E/F/G/H/I/J/K/L/M=160-458"/>
</dbReference>
<dbReference type="PDB" id="6OMA">
    <property type="method" value="EM"/>
    <property type="resolution" value="7.20 A"/>
    <property type="chains" value="A/B/C/D/E/F/G/H/I/J/K/L/M=160-458"/>
</dbReference>
<dbReference type="PDB" id="6OMC">
    <property type="method" value="EM"/>
    <property type="resolution" value="3.80 A"/>
    <property type="chains" value="A/B/C/D/E/F/G/H/I/J/K/L/M=160-458"/>
</dbReference>
<dbReference type="PDB" id="8ZVI">
    <property type="method" value="EM"/>
    <property type="resolution" value="3.40 A"/>
    <property type="chains" value="A/B/C/D/E/F/G/H/I/J/K/L=1-458"/>
</dbReference>
<dbReference type="PDBsum" id="5TJT"/>
<dbReference type="PDBsum" id="6OKB"/>
<dbReference type="PDBsum" id="6OMA"/>
<dbReference type="PDBsum" id="6OMC"/>
<dbReference type="PDBsum" id="8ZVI"/>
<dbReference type="EMDB" id="EMD-20099"/>
<dbReference type="EMDB" id="EMD-20122"/>
<dbReference type="EMDB" id="EMD-20125"/>
<dbReference type="EMDB" id="EMD-60511"/>
<dbReference type="SMR" id="Q6QGD8"/>
<dbReference type="KEGG" id="vg:2777673"/>
<dbReference type="Proteomes" id="UP000002107">
    <property type="component" value="Genome"/>
</dbReference>
<dbReference type="Proteomes" id="UP000002141">
    <property type="component" value="Segment"/>
</dbReference>
<dbReference type="Proteomes" id="UP000002503">
    <property type="component" value="Segment"/>
</dbReference>
<dbReference type="GO" id="GO:0039621">
    <property type="term" value="C:T=13 icosahedral viral capsid"/>
    <property type="evidence" value="ECO:0007669"/>
    <property type="project" value="UniProtKB-KW"/>
</dbReference>
<dbReference type="GO" id="GO:0019028">
    <property type="term" value="C:viral capsid"/>
    <property type="evidence" value="ECO:0000314"/>
    <property type="project" value="UniProtKB"/>
</dbReference>
<dbReference type="GO" id="GO:0046806">
    <property type="term" value="C:viral scaffold"/>
    <property type="evidence" value="ECO:0000314"/>
    <property type="project" value="UniProtKB"/>
</dbReference>
<dbReference type="GO" id="GO:0042783">
    <property type="term" value="P:symbiont-mediated evasion of host immune response"/>
    <property type="evidence" value="ECO:0000314"/>
    <property type="project" value="UniProtKB"/>
</dbReference>
<dbReference type="Gene3D" id="3.30.2400.10">
    <property type="entry name" value="Major capsid protein gp5"/>
    <property type="match status" value="1"/>
</dbReference>
<dbReference type="InterPro" id="IPR024455">
    <property type="entry name" value="Phage_capsid"/>
</dbReference>
<dbReference type="InterPro" id="IPR054612">
    <property type="entry name" value="Phage_capsid-like_C"/>
</dbReference>
<dbReference type="NCBIfam" id="TIGR01554">
    <property type="entry name" value="major_cap_HK97"/>
    <property type="match status" value="1"/>
</dbReference>
<dbReference type="Pfam" id="PF05065">
    <property type="entry name" value="Phage_capsid"/>
    <property type="match status" value="1"/>
</dbReference>
<dbReference type="SUPFAM" id="SSF56563">
    <property type="entry name" value="Major capsid protein gp5"/>
    <property type="match status" value="1"/>
</dbReference>